<feature type="chain" id="PRO_0000060686" description="Cytochrome b">
    <location>
        <begin position="1"/>
        <end position="379"/>
    </location>
</feature>
<feature type="transmembrane region" description="Helical" evidence="19">
    <location>
        <begin position="33"/>
        <end position="53"/>
    </location>
</feature>
<feature type="transmembrane region" description="Helical" evidence="19">
    <location>
        <begin position="77"/>
        <end position="98"/>
    </location>
</feature>
<feature type="transmembrane region" description="Helical" evidence="19">
    <location>
        <begin position="113"/>
        <end position="133"/>
    </location>
</feature>
<feature type="transmembrane region" description="Helical" evidence="19">
    <location>
        <begin position="178"/>
        <end position="198"/>
    </location>
</feature>
<feature type="transmembrane region" description="Helical" evidence="19">
    <location>
        <begin position="226"/>
        <end position="246"/>
    </location>
</feature>
<feature type="transmembrane region" description="Helical" evidence="19">
    <location>
        <begin position="288"/>
        <end position="308"/>
    </location>
</feature>
<feature type="transmembrane region" description="Helical" evidence="19">
    <location>
        <begin position="320"/>
        <end position="340"/>
    </location>
</feature>
<feature type="transmembrane region" description="Helical" evidence="19">
    <location>
        <begin position="347"/>
        <end position="367"/>
    </location>
</feature>
<feature type="binding site" description="axial binding residue" evidence="2 4 6 7 8 11 13 19 20 21 22 23 24 25 26 27 28 29 30 31 32 33 34 35 36">
    <location>
        <position position="83"/>
    </location>
    <ligand>
        <name>heme b</name>
        <dbReference type="ChEBI" id="CHEBI:60344"/>
        <label>b562</label>
    </ligand>
    <ligandPart>
        <name>Fe</name>
        <dbReference type="ChEBI" id="CHEBI:18248"/>
    </ligandPart>
</feature>
<feature type="binding site" description="axial binding residue" evidence="4 6 7 8 11 13 17 18 19 20 21 22 23 25 26 27 28 29 30 31 32 33 34 35 36">
    <location>
        <position position="97"/>
    </location>
    <ligand>
        <name>heme b</name>
        <dbReference type="ChEBI" id="CHEBI:60344"/>
        <label>b566</label>
    </ligand>
    <ligandPart>
        <name>Fe</name>
        <dbReference type="ChEBI" id="CHEBI:18248"/>
    </ligandPart>
</feature>
<feature type="binding site" description="axial binding residue" evidence="4 6 7 8 11 13 20 21 22 23 24 25 26 27 28 29 30 31 32 33 34 35 36">
    <location>
        <position position="182"/>
    </location>
    <ligand>
        <name>heme b</name>
        <dbReference type="ChEBI" id="CHEBI:60344"/>
        <label>b562</label>
    </ligand>
    <ligandPart>
        <name>Fe</name>
        <dbReference type="ChEBI" id="CHEBI:18248"/>
    </ligandPart>
</feature>
<feature type="binding site" description="axial binding residue" evidence="4 6 7 8 11 13 17 18 19 20 21 22 23 25 26 27 28 29 30 31 32 33 34 35 36">
    <location>
        <position position="196"/>
    </location>
    <ligand>
        <name>heme b</name>
        <dbReference type="ChEBI" id="CHEBI:60344"/>
        <label>b566</label>
    </ligand>
    <ligandPart>
        <name>Fe</name>
        <dbReference type="ChEBI" id="CHEBI:18248"/>
    </ligandPart>
</feature>
<feature type="binding site" evidence="6 7 25 30 32 34">
    <location>
        <position position="201"/>
    </location>
    <ligand>
        <name>a ubiquinone</name>
        <dbReference type="ChEBI" id="CHEBI:16389"/>
    </ligand>
</feature>
<feature type="sequence variant" description="In strain: 65, 66 and D.">
    <original>F</original>
    <variation>V</variation>
    <location>
        <position position="90"/>
    </location>
</feature>
<feature type="helix" evidence="40">
    <location>
        <begin position="4"/>
        <end position="7"/>
    </location>
</feature>
<feature type="helix" evidence="40">
    <location>
        <begin position="9"/>
        <end position="18"/>
    </location>
</feature>
<feature type="strand" evidence="39">
    <location>
        <begin position="22"/>
        <end position="24"/>
    </location>
</feature>
<feature type="helix" evidence="39">
    <location>
        <begin position="29"/>
        <end position="31"/>
    </location>
</feature>
<feature type="helix" evidence="39">
    <location>
        <begin position="33"/>
        <end position="52"/>
    </location>
</feature>
<feature type="turn" evidence="39">
    <location>
        <begin position="59"/>
        <end position="61"/>
    </location>
</feature>
<feature type="helix" evidence="39">
    <location>
        <begin position="62"/>
        <end position="72"/>
    </location>
</feature>
<feature type="strand" evidence="37">
    <location>
        <begin position="73"/>
        <end position="75"/>
    </location>
</feature>
<feature type="helix" evidence="39">
    <location>
        <begin position="76"/>
        <end position="103"/>
    </location>
</feature>
<feature type="helix" evidence="39">
    <location>
        <begin position="106"/>
        <end position="108"/>
    </location>
</feature>
<feature type="helix" evidence="39">
    <location>
        <begin position="110"/>
        <end position="132"/>
    </location>
</feature>
<feature type="helix" evidence="39">
    <location>
        <begin position="137"/>
        <end position="147"/>
    </location>
</feature>
<feature type="helix" evidence="39">
    <location>
        <begin position="148"/>
        <end position="152"/>
    </location>
</feature>
<feature type="turn" evidence="39">
    <location>
        <begin position="154"/>
        <end position="156"/>
    </location>
</feature>
<feature type="helix" evidence="39">
    <location>
        <begin position="157"/>
        <end position="165"/>
    </location>
</feature>
<feature type="strand" evidence="39">
    <location>
        <begin position="167"/>
        <end position="170"/>
    </location>
</feature>
<feature type="helix" evidence="39">
    <location>
        <begin position="172"/>
        <end position="203"/>
    </location>
</feature>
<feature type="helix" evidence="39">
    <location>
        <begin position="214"/>
        <end position="216"/>
    </location>
</feature>
<feature type="strand" evidence="39">
    <location>
        <begin position="217"/>
        <end position="219"/>
    </location>
</feature>
<feature type="helix" evidence="39">
    <location>
        <begin position="220"/>
        <end position="245"/>
    </location>
</feature>
<feature type="turn" evidence="39">
    <location>
        <begin position="247"/>
        <end position="250"/>
    </location>
</feature>
<feature type="helix" evidence="39">
    <location>
        <begin position="253"/>
        <end position="256"/>
    </location>
</feature>
<feature type="turn" evidence="38">
    <location>
        <begin position="261"/>
        <end position="263"/>
    </location>
</feature>
<feature type="helix" evidence="39">
    <location>
        <begin position="272"/>
        <end position="274"/>
    </location>
</feature>
<feature type="helix" evidence="39">
    <location>
        <begin position="275"/>
        <end position="282"/>
    </location>
</feature>
<feature type="strand" evidence="40">
    <location>
        <begin position="284"/>
        <end position="286"/>
    </location>
</feature>
<feature type="helix" evidence="39">
    <location>
        <begin position="287"/>
        <end position="299"/>
    </location>
</feature>
<feature type="helix" evidence="39">
    <location>
        <begin position="300"/>
        <end position="307"/>
    </location>
</feature>
<feature type="strand" evidence="39">
    <location>
        <begin position="311"/>
        <end position="315"/>
    </location>
</feature>
<feature type="helix" evidence="39">
    <location>
        <begin position="319"/>
        <end position="339"/>
    </location>
</feature>
<feature type="helix" evidence="39">
    <location>
        <begin position="347"/>
        <end position="363"/>
    </location>
</feature>
<feature type="helix" evidence="39">
    <location>
        <begin position="365"/>
        <end position="376"/>
    </location>
</feature>
<geneLocation type="mitochondrion"/>
<organism>
    <name type="scientific">Bos taurus</name>
    <name type="common">Bovine</name>
    <dbReference type="NCBI Taxonomy" id="9913"/>
    <lineage>
        <taxon>Eukaryota</taxon>
        <taxon>Metazoa</taxon>
        <taxon>Chordata</taxon>
        <taxon>Craniata</taxon>
        <taxon>Vertebrata</taxon>
        <taxon>Euteleostomi</taxon>
        <taxon>Mammalia</taxon>
        <taxon>Eutheria</taxon>
        <taxon>Laurasiatheria</taxon>
        <taxon>Artiodactyla</taxon>
        <taxon>Ruminantia</taxon>
        <taxon>Pecora</taxon>
        <taxon>Bovidae</taxon>
        <taxon>Bovinae</taxon>
        <taxon>Bos</taxon>
    </lineage>
</organism>
<proteinExistence type="evidence at protein level"/>
<protein>
    <recommendedName>
        <fullName>Cytochrome b</fullName>
    </recommendedName>
    <alternativeName>
        <fullName>Complex III subunit 3</fullName>
    </alternativeName>
    <alternativeName>
        <fullName>Complex III subunit III</fullName>
    </alternativeName>
    <alternativeName>
        <fullName>Cytochrome b-c1 complex subunit 3</fullName>
    </alternativeName>
    <alternativeName>
        <fullName>Ubiquinol-cytochrome-c reductase complex cytochrome b subunit</fullName>
    </alternativeName>
</protein>
<keyword id="KW-0002">3D-structure</keyword>
<keyword id="KW-0249">Electron transport</keyword>
<keyword id="KW-0349">Heme</keyword>
<keyword id="KW-0408">Iron</keyword>
<keyword id="KW-0472">Membrane</keyword>
<keyword id="KW-0479">Metal-binding</keyword>
<keyword id="KW-0496">Mitochondrion</keyword>
<keyword id="KW-0999">Mitochondrion inner membrane</keyword>
<keyword id="KW-1185">Reference proteome</keyword>
<keyword id="KW-0679">Respiratory chain</keyword>
<keyword id="KW-0812">Transmembrane</keyword>
<keyword id="KW-1133">Transmembrane helix</keyword>
<keyword id="KW-0813">Transport</keyword>
<keyword id="KW-0830">Ubiquinone</keyword>
<name>CYB_BOVIN</name>
<gene>
    <name type="primary">MT-CYB</name>
    <name type="synonym">COB</name>
    <name type="synonym">CYTB</name>
    <name type="synonym">MTCYB</name>
</gene>
<reference key="1">
    <citation type="journal article" date="1982" name="J. Mol. Biol.">
        <title>Complete sequence of bovine mitochondrial DNA. Conserved features of the mammalian mitochondrial genome.</title>
        <authorList>
            <person name="Anderson S."/>
            <person name="de Bruijn M.H.L."/>
            <person name="Coulson A.R."/>
            <person name="Eperon I.C."/>
            <person name="Sanger F."/>
            <person name="Young I.G."/>
        </authorList>
    </citation>
    <scope>NUCLEOTIDE SEQUENCE [GENOMIC DNA]</scope>
    <source>
        <strain evidence="16">Hereford</strain>
        <tissue>Heart</tissue>
    </source>
</reference>
<reference key="2">
    <citation type="journal article" date="1991" name="J. Mol. Evol.">
        <title>Evolution of the cytochrome b gene of mammals.</title>
        <authorList>
            <person name="Irwin D.M."/>
            <person name="Kocher T.D."/>
            <person name="Wilson A.C."/>
        </authorList>
    </citation>
    <scope>NUCLEOTIDE SEQUENCE [GENOMIC DNA]</scope>
</reference>
<reference key="3">
    <citation type="submission" date="2002-03" db="EMBL/GenBank/DDBJ databases">
        <title>Bos taurus mitochondrial protein coding regions.</title>
        <authorList>
            <person name="Wettstein P.J."/>
        </authorList>
    </citation>
    <scope>NUCLEOTIDE SEQUENCE [GENOMIC DNA]</scope>
    <source>
        <strain>65</strain>
        <strain>66</strain>
        <strain>D</strain>
        <strain>F</strain>
    </source>
</reference>
<reference key="4">
    <citation type="journal article" date="1975" name="FEBS Lett.">
        <title>Fine structure of beef heart mitochondrial complex III.</title>
        <authorList>
            <person name="Vail W.J."/>
            <person name="Riley R.K."/>
            <person name="Rieske J.S."/>
        </authorList>
    </citation>
    <scope>SUBCELLULAR LOCATION</scope>
    <scope>TISSUE SPECIFICITY</scope>
</reference>
<reference key="5">
    <citation type="journal article" date="1977" name="Biochim. Biophys. Acta">
        <title>bc1-complex from beef heart. One-step purification by hydroxyapatite chromatography in Triton X-100, polypeptide pattern and respiratory chain characteristics.</title>
        <authorList>
            <person name="Riccio P."/>
            <person name="Schaegger H."/>
            <person name="Engel W.D."/>
            <person name="Von Jagow G."/>
        </authorList>
    </citation>
    <scope>FUNCTION</scope>
    <scope>SUBCELLULAR LOCATION</scope>
    <scope>TISSUE SPECIFICITY</scope>
    <scope>SUBUNIT</scope>
</reference>
<reference key="6">
    <citation type="journal article" date="1992" name="Eur. J. Biochem.">
        <title>Characteristics of energy-linked proton translocation in liposome reconstituted bovine cytochrome bc1 complex. Influence of the protonmotive force on the H+/e- stoichiometry.</title>
        <authorList>
            <person name="Cocco T."/>
            <person name="Lorusso M."/>
            <person name="Di Paola M."/>
            <person name="Minuto M."/>
            <person name="Papa S."/>
        </authorList>
    </citation>
    <scope>FUNCTION</scope>
    <scope>SUBCELLULAR LOCATION</scope>
    <scope>TISSUE SPECIFICITY</scope>
</reference>
<reference key="7">
    <citation type="journal article" date="1998" name="Biochemistry">
        <title>Chemical modification of the bovine mitochondrial bc1 complex reveals critical acidic residues involved in the proton pumping activity.</title>
        <authorList>
            <person name="Cocco T."/>
            <person name="Di Paola M."/>
            <person name="Papa S."/>
            <person name="Lorusso M."/>
        </authorList>
    </citation>
    <scope>FUNCTION</scope>
</reference>
<reference key="8">
    <citation type="journal article" date="2010" name="Biochim. Biophys. Acta">
        <title>Ascochlorin is a novel, specific inhibitor of the mitochondrial cytochrome bc1 complex.</title>
        <authorList>
            <person name="Berry E.A."/>
            <person name="Huang L.S."/>
            <person name="Lee D.W."/>
            <person name="Daldal F."/>
            <person name="Nagai K."/>
            <person name="Minagawa N."/>
        </authorList>
    </citation>
    <scope>FUNCTION</scope>
</reference>
<reference key="9">
    <citation type="journal article" date="1997" name="Science">
        <title>Crystal structure of the cytochrome bc1 complex from bovine heart mitochondria.</title>
        <authorList>
            <person name="Xia D."/>
            <person name="Yu C.A."/>
            <person name="Kim H."/>
            <person name="Xia J.Z."/>
            <person name="Kachurin A.M."/>
            <person name="Zhang L."/>
            <person name="Yu L."/>
            <person name="Deisenhofer J."/>
        </authorList>
    </citation>
    <scope>X-RAY CRYSTALLOGRAPHY (2.7 ANGSTROMS) IN COMPLEX WITH THE CYTOCHROME BC1 COMPLEX AND HEME</scope>
    <scope>SUBUNIT</scope>
    <scope>TOPOLOGY</scope>
    <scope>COFACTOR</scope>
</reference>
<reference evidence="17 18" key="10">
    <citation type="journal article" date="1998" name="Science">
        <title>Complete structure of the 11-subunit bovine mitochondrial cytochrome bc1 complex.</title>
        <authorList>
            <person name="Iwata S."/>
            <person name="Lee J.W."/>
            <person name="Okada K."/>
            <person name="Lee J.K."/>
            <person name="Iwata M."/>
            <person name="Rasmussen B."/>
            <person name="Link T.A."/>
            <person name="Ramaswamy S."/>
            <person name="Jap B.K."/>
        </authorList>
    </citation>
    <scope>X-RAY CRYSTALLOGRAPHY (3.00 ANGSTROMS) IN COMPLEX WITH THE CYTOCHROME BC1 COMPLEX AND HEME</scope>
    <scope>SUBUNIT</scope>
    <scope>TOPOLOGY</scope>
    <scope>COFACTOR</scope>
</reference>
<reference evidence="19 20" key="11">
    <citation type="journal article" date="2002" name="Biochemistry">
        <title>The crystal structure of mitochondrial cytochrome bc1 in complex with famoxadone: the role of aromatic-aromatic interaction in inhibition.</title>
        <authorList>
            <person name="Gao X."/>
            <person name="Wen X."/>
            <person name="Yu C."/>
            <person name="Esser L."/>
            <person name="Tsao S."/>
            <person name="Quinn B."/>
            <person name="Zhang L."/>
            <person name="Yu L."/>
            <person name="Xia D."/>
        </authorList>
    </citation>
    <scope>X-RAY CRYSTALLOGRAPHY (2.35 ANGSTROMS) IN COMPLEX WITH THE CYTOCHROME BC1 COMPLEX AND HEME</scope>
    <scope>SUBUNIT</scope>
    <scope>TOPOLOGY</scope>
    <scope>COFACTOR</scope>
</reference>
<reference evidence="27 28 29 30 31" key="12">
    <citation type="journal article" date="2004" name="J. Mol. Biol.">
        <title>Crystallographic studies of quinol oxidation site inhibitors: a modified classification of inhibitors for the cytochrome bc(1) complex.</title>
        <authorList>
            <person name="Esser L."/>
            <person name="Quinn B."/>
            <person name="Li Y.F."/>
            <person name="Zhang M."/>
            <person name="Elberry M."/>
            <person name="Yu L."/>
            <person name="Yu C.A."/>
            <person name="Xia D."/>
        </authorList>
    </citation>
    <scope>X-RAY CRYSTALLOGRAPHY (2.60 ANGSTROMS) IN COMPLEX WITH HEME AND UBIQUINONE</scope>
    <scope>SUBUNIT</scope>
    <scope>TOPOLOGY</scope>
    <scope>COFACTOR</scope>
</reference>
<reference evidence="25 26 32" key="13">
    <citation type="journal article" date="2005" name="J. Mol. Biol.">
        <title>Binding of the respiratory chain inhibitor antimycin to the mitochondrial bc1 complex: a new crystal structure reveals an altered intramolecular hydrogen-bonding pattern.</title>
        <authorList>
            <person name="Huang L.S."/>
            <person name="Cobessi D."/>
            <person name="Tung E.Y."/>
            <person name="Berry E.A."/>
        </authorList>
    </citation>
    <scope>X-RAY CRYSTALLOGRAPHY (2.10 ANGSTROMS) IN COMPLEX WITH HEME AND UBIQUINONE</scope>
    <scope>SUBUNIT</scope>
    <scope>TOPOLOGY</scope>
    <scope>COFACTOR</scope>
</reference>
<reference evidence="33" key="14">
    <citation type="journal article" date="2006" name="Proc. Natl. Acad. Sci. U.S.A.">
        <title>Surface-modulated motion switch: capture and release of iron-sulfur protein in the cytochrome bc1 complex.</title>
        <authorList>
            <person name="Esser L."/>
            <person name="Gong X."/>
            <person name="Yang S."/>
            <person name="Yu L."/>
            <person name="Yu C.A."/>
            <person name="Xia D."/>
        </authorList>
    </citation>
    <scope>X-RAY CRYSTALLOGRAPHY (2.26 ANGSTROMS) IN COMPLEX WITH HEME</scope>
    <scope>SUBUNIT</scope>
    <scope>TOPOLOGY</scope>
    <scope>COFACTOR</scope>
</reference>
<dbReference type="EMBL" id="V00654">
    <property type="protein sequence ID" value="CAA24007.1"/>
    <property type="molecule type" value="Genomic_DNA"/>
</dbReference>
<dbReference type="EMBL" id="AF490528">
    <property type="protein sequence ID" value="AAM08329.1"/>
    <property type="molecule type" value="Genomic_DNA"/>
</dbReference>
<dbReference type="EMBL" id="AF490529">
    <property type="protein sequence ID" value="AAM08342.1"/>
    <property type="molecule type" value="Genomic_DNA"/>
</dbReference>
<dbReference type="EMBL" id="AF493541">
    <property type="protein sequence ID" value="AAM12801.1"/>
    <property type="molecule type" value="Genomic_DNA"/>
</dbReference>
<dbReference type="EMBL" id="AF493542">
    <property type="protein sequence ID" value="AAM12814.1"/>
    <property type="molecule type" value="Genomic_DNA"/>
</dbReference>
<dbReference type="PIR" id="A00152">
    <property type="entry name" value="CBBO"/>
</dbReference>
<dbReference type="RefSeq" id="YP_209217.1">
    <property type="nucleotide sequence ID" value="NC_006853.1"/>
</dbReference>
<dbReference type="PDB" id="1BE3">
    <property type="method" value="X-ray"/>
    <property type="resolution" value="3.00 A"/>
    <property type="chains" value="C=1-379"/>
</dbReference>
<dbReference type="PDB" id="1BGY">
    <property type="method" value="X-ray"/>
    <property type="resolution" value="3.00 A"/>
    <property type="chains" value="C/O=1-379"/>
</dbReference>
<dbReference type="PDB" id="1L0L">
    <property type="method" value="X-ray"/>
    <property type="resolution" value="2.35 A"/>
    <property type="chains" value="C=1-379"/>
</dbReference>
<dbReference type="PDB" id="1L0N">
    <property type="method" value="X-ray"/>
    <property type="resolution" value="2.60 A"/>
    <property type="chains" value="C=1-379"/>
</dbReference>
<dbReference type="PDB" id="1NTK">
    <property type="method" value="X-ray"/>
    <property type="resolution" value="2.60 A"/>
    <property type="chains" value="C=1-379"/>
</dbReference>
<dbReference type="PDB" id="1NTM">
    <property type="method" value="X-ray"/>
    <property type="resolution" value="2.40 A"/>
    <property type="chains" value="C=1-379"/>
</dbReference>
<dbReference type="PDB" id="1NTZ">
    <property type="method" value="X-ray"/>
    <property type="resolution" value="2.60 A"/>
    <property type="chains" value="C=1-379"/>
</dbReference>
<dbReference type="PDB" id="1NU1">
    <property type="method" value="X-ray"/>
    <property type="resolution" value="3.20 A"/>
    <property type="chains" value="C=1-379"/>
</dbReference>
<dbReference type="PDB" id="1PP9">
    <property type="method" value="X-ray"/>
    <property type="resolution" value="2.10 A"/>
    <property type="chains" value="C/P=1-379"/>
</dbReference>
<dbReference type="PDB" id="1PPJ">
    <property type="method" value="X-ray"/>
    <property type="resolution" value="2.10 A"/>
    <property type="chains" value="C/P=1-379"/>
</dbReference>
<dbReference type="PDB" id="1QCR">
    <property type="method" value="X-ray"/>
    <property type="resolution" value="2.70 A"/>
    <property type="chains" value="C=2-379"/>
</dbReference>
<dbReference type="PDB" id="1SQB">
    <property type="method" value="X-ray"/>
    <property type="resolution" value="2.69 A"/>
    <property type="chains" value="C=1-379"/>
</dbReference>
<dbReference type="PDB" id="1SQP">
    <property type="method" value="X-ray"/>
    <property type="resolution" value="2.70 A"/>
    <property type="chains" value="C=1-379"/>
</dbReference>
<dbReference type="PDB" id="1SQQ">
    <property type="method" value="X-ray"/>
    <property type="resolution" value="3.00 A"/>
    <property type="chains" value="C=1-379"/>
</dbReference>
<dbReference type="PDB" id="1SQV">
    <property type="method" value="X-ray"/>
    <property type="resolution" value="2.85 A"/>
    <property type="chains" value="C=1-379"/>
</dbReference>
<dbReference type="PDB" id="1SQX">
    <property type="method" value="X-ray"/>
    <property type="resolution" value="2.60 A"/>
    <property type="chains" value="C=1-379"/>
</dbReference>
<dbReference type="PDB" id="2A06">
    <property type="method" value="X-ray"/>
    <property type="resolution" value="2.10 A"/>
    <property type="chains" value="C/P=1-379"/>
</dbReference>
<dbReference type="PDB" id="2FYU">
    <property type="method" value="X-ray"/>
    <property type="resolution" value="2.26 A"/>
    <property type="chains" value="C=1-379"/>
</dbReference>
<dbReference type="PDB" id="2YBB">
    <property type="method" value="EM"/>
    <property type="resolution" value="19.00 A"/>
    <property type="chains" value="C/c=1-379"/>
</dbReference>
<dbReference type="PDB" id="4D6T">
    <property type="method" value="X-ray"/>
    <property type="resolution" value="3.57 A"/>
    <property type="chains" value="C/P=1-379"/>
</dbReference>
<dbReference type="PDB" id="4D6U">
    <property type="method" value="X-ray"/>
    <property type="resolution" value="4.09 A"/>
    <property type="chains" value="C/P=1-379"/>
</dbReference>
<dbReference type="PDB" id="5GPN">
    <property type="method" value="EM"/>
    <property type="resolution" value="5.40 A"/>
    <property type="chains" value="C/O=1-379"/>
</dbReference>
<dbReference type="PDB" id="5KLV">
    <property type="method" value="X-ray"/>
    <property type="resolution" value="2.65 A"/>
    <property type="chains" value="C=1-379"/>
</dbReference>
<dbReference type="PDB" id="5LUF">
    <property type="method" value="EM"/>
    <property type="resolution" value="9.10 A"/>
    <property type="chains" value="b/o=1-379"/>
</dbReference>
<dbReference type="PDB" id="5NMI">
    <property type="method" value="X-ray"/>
    <property type="resolution" value="3.50 A"/>
    <property type="chains" value="C/P=8-379"/>
</dbReference>
<dbReference type="PDB" id="5OKD">
    <property type="method" value="X-ray"/>
    <property type="resolution" value="3.10 A"/>
    <property type="chains" value="C=1-379"/>
</dbReference>
<dbReference type="PDB" id="6FO0">
    <property type="method" value="EM"/>
    <property type="resolution" value="4.10 A"/>
    <property type="chains" value="C/P=1-379"/>
</dbReference>
<dbReference type="PDB" id="6FO2">
    <property type="method" value="EM"/>
    <property type="resolution" value="4.40 A"/>
    <property type="chains" value="C/P=1-379"/>
</dbReference>
<dbReference type="PDB" id="6FO6">
    <property type="method" value="EM"/>
    <property type="resolution" value="4.10 A"/>
    <property type="chains" value="C/P=1-379"/>
</dbReference>
<dbReference type="PDB" id="6HAW">
    <property type="method" value="X-ray"/>
    <property type="resolution" value="3.45 A"/>
    <property type="chains" value="C=2-379"/>
</dbReference>
<dbReference type="PDB" id="6NHG">
    <property type="method" value="X-ray"/>
    <property type="resolution" value="2.80 A"/>
    <property type="chains" value="C=1-379"/>
</dbReference>
<dbReference type="PDB" id="6XVF">
    <property type="method" value="X-ray"/>
    <property type="resolution" value="3.50 A"/>
    <property type="chains" value="C=2-379"/>
</dbReference>
<dbReference type="PDB" id="6ZFS">
    <property type="method" value="X-ray"/>
    <property type="resolution" value="3.50 A"/>
    <property type="chains" value="C=2-379"/>
</dbReference>
<dbReference type="PDB" id="6ZFT">
    <property type="method" value="X-ray"/>
    <property type="resolution" value="3.30 A"/>
    <property type="chains" value="C=2-379"/>
</dbReference>
<dbReference type="PDB" id="6ZFU">
    <property type="method" value="X-ray"/>
    <property type="resolution" value="3.50 A"/>
    <property type="chains" value="C=2-379"/>
</dbReference>
<dbReference type="PDB" id="7DGQ">
    <property type="method" value="EM"/>
    <property type="resolution" value="5.00 A"/>
    <property type="chains" value="m/y=1-379"/>
</dbReference>
<dbReference type="PDB" id="7DGR">
    <property type="method" value="EM"/>
    <property type="resolution" value="4.60 A"/>
    <property type="chains" value="m/y=1-379"/>
</dbReference>
<dbReference type="PDB" id="7DGS">
    <property type="method" value="EM"/>
    <property type="resolution" value="7.80 A"/>
    <property type="chains" value="m/y=1-379"/>
</dbReference>
<dbReference type="PDB" id="7DKF">
    <property type="method" value="EM"/>
    <property type="resolution" value="8.30 A"/>
    <property type="chains" value="C1/O1=1-379"/>
</dbReference>
<dbReference type="PDB" id="7R3V">
    <property type="method" value="X-ray"/>
    <property type="resolution" value="3.20 A"/>
    <property type="chains" value="C=1-379"/>
</dbReference>
<dbReference type="PDB" id="7TAY">
    <property type="method" value="X-ray"/>
    <property type="resolution" value="2.95 A"/>
    <property type="chains" value="C=1-379"/>
</dbReference>
<dbReference type="PDB" id="7TZ6">
    <property type="method" value="EM"/>
    <property type="resolution" value="2.88 A"/>
    <property type="chains" value="C/P=1-379"/>
</dbReference>
<dbReference type="PDB" id="8P65">
    <property type="method" value="EM"/>
    <property type="resolution" value="3.00 A"/>
    <property type="chains" value="C/P=1-379"/>
</dbReference>
<dbReference type="PDB" id="9GCX">
    <property type="method" value="X-ray"/>
    <property type="resolution" value="3.52 A"/>
    <property type="chains" value="C=1-379"/>
</dbReference>
<dbReference type="PDBsum" id="1BE3"/>
<dbReference type="PDBsum" id="1BGY"/>
<dbReference type="PDBsum" id="1L0L"/>
<dbReference type="PDBsum" id="1L0N"/>
<dbReference type="PDBsum" id="1NTK"/>
<dbReference type="PDBsum" id="1NTM"/>
<dbReference type="PDBsum" id="1NTZ"/>
<dbReference type="PDBsum" id="1NU1"/>
<dbReference type="PDBsum" id="1PP9"/>
<dbReference type="PDBsum" id="1PPJ"/>
<dbReference type="PDBsum" id="1QCR"/>
<dbReference type="PDBsum" id="1SQB"/>
<dbReference type="PDBsum" id="1SQP"/>
<dbReference type="PDBsum" id="1SQQ"/>
<dbReference type="PDBsum" id="1SQV"/>
<dbReference type="PDBsum" id="1SQX"/>
<dbReference type="PDBsum" id="2A06"/>
<dbReference type="PDBsum" id="2FYU"/>
<dbReference type="PDBsum" id="2YBB"/>
<dbReference type="PDBsum" id="4D6T"/>
<dbReference type="PDBsum" id="4D6U"/>
<dbReference type="PDBsum" id="5GPN"/>
<dbReference type="PDBsum" id="5KLV"/>
<dbReference type="PDBsum" id="5LUF"/>
<dbReference type="PDBsum" id="5NMI"/>
<dbReference type="PDBsum" id="5OKD"/>
<dbReference type="PDBsum" id="6FO0"/>
<dbReference type="PDBsum" id="6FO2"/>
<dbReference type="PDBsum" id="6FO6"/>
<dbReference type="PDBsum" id="6HAW"/>
<dbReference type="PDBsum" id="6NHG"/>
<dbReference type="PDBsum" id="6XVF"/>
<dbReference type="PDBsum" id="6ZFS"/>
<dbReference type="PDBsum" id="6ZFT"/>
<dbReference type="PDBsum" id="6ZFU"/>
<dbReference type="PDBsum" id="7DGQ"/>
<dbReference type="PDBsum" id="7DGR"/>
<dbReference type="PDBsum" id="7DGS"/>
<dbReference type="PDBsum" id="7DKF"/>
<dbReference type="PDBsum" id="7R3V"/>
<dbReference type="PDBsum" id="7TAY"/>
<dbReference type="PDBsum" id="7TZ6"/>
<dbReference type="PDBsum" id="8P65"/>
<dbReference type="PDBsum" id="9GCX"/>
<dbReference type="EMDB" id="EMD-17461"/>
<dbReference type="EMDB" id="EMD-26203"/>
<dbReference type="EMDB" id="EMD-30673"/>
<dbReference type="EMDB" id="EMD-4107"/>
<dbReference type="EMDB" id="EMD-4286"/>
<dbReference type="EMDB" id="EMD-4288"/>
<dbReference type="EMDB" id="EMD-4292"/>
<dbReference type="EMDB" id="EMD-9534"/>
<dbReference type="SMR" id="P00157"/>
<dbReference type="CORUM" id="P00157"/>
<dbReference type="DIP" id="DIP-350N"/>
<dbReference type="FunCoup" id="P00157">
    <property type="interactions" value="230"/>
</dbReference>
<dbReference type="IntAct" id="P00157">
    <property type="interactions" value="2"/>
</dbReference>
<dbReference type="STRING" id="9913.ENSBTAP00000053148"/>
<dbReference type="TCDB" id="3.D.3.2.1">
    <property type="family name" value="the proton-translocating quinol:cytochrome c reductase (qcr) superfamily"/>
</dbReference>
<dbReference type="PaxDb" id="9913-ENSBTAP00000053148"/>
<dbReference type="Ensembl" id="ENSBTAT00000060567.1">
    <property type="protein sequence ID" value="ENSBTAP00000053148.1"/>
    <property type="gene ID" value="ENSBTAG00000043550.1"/>
</dbReference>
<dbReference type="GeneID" id="3283889"/>
<dbReference type="KEGG" id="bta:3283889"/>
<dbReference type="CTD" id="4519"/>
<dbReference type="VEuPathDB" id="HostDB:ENSBTAG00000043550"/>
<dbReference type="VGNC" id="VGNC:55738">
    <property type="gene designation" value="MT-CYB"/>
</dbReference>
<dbReference type="eggNOG" id="KOG4663">
    <property type="taxonomic scope" value="Eukaryota"/>
</dbReference>
<dbReference type="GeneTree" id="ENSGT00390000017948"/>
<dbReference type="HOGENOM" id="CLU_031114_3_0_1"/>
<dbReference type="InParanoid" id="P00157"/>
<dbReference type="OMA" id="NISAWWN"/>
<dbReference type="OrthoDB" id="244at2759"/>
<dbReference type="TreeFam" id="TF353088"/>
<dbReference type="Reactome" id="R-BTA-611105">
    <property type="pathway name" value="Respiratory electron transport"/>
</dbReference>
<dbReference type="Reactome" id="R-BTA-9865881">
    <property type="pathway name" value="Complex III assembly"/>
</dbReference>
<dbReference type="EvolutionaryTrace" id="P00157"/>
<dbReference type="PRO" id="PR:P00157"/>
<dbReference type="Proteomes" id="UP000009136">
    <property type="component" value="Mitochondrion MT"/>
</dbReference>
<dbReference type="Bgee" id="ENSBTAG00000043550">
    <property type="expression patterns" value="Expressed in cardiac ventricle and 102 other cell types or tissues"/>
</dbReference>
<dbReference type="GO" id="GO:0016020">
    <property type="term" value="C:membrane"/>
    <property type="evidence" value="ECO:0000314"/>
    <property type="project" value="UniProtKB"/>
</dbReference>
<dbReference type="GO" id="GO:0005743">
    <property type="term" value="C:mitochondrial inner membrane"/>
    <property type="evidence" value="ECO:0007669"/>
    <property type="project" value="UniProtKB-SubCell"/>
</dbReference>
<dbReference type="GO" id="GO:0031966">
    <property type="term" value="C:mitochondrial membrane"/>
    <property type="evidence" value="ECO:0000314"/>
    <property type="project" value="UniProtKB"/>
</dbReference>
<dbReference type="GO" id="GO:0045275">
    <property type="term" value="C:respiratory chain complex III"/>
    <property type="evidence" value="ECO:0000314"/>
    <property type="project" value="UniProtKB"/>
</dbReference>
<dbReference type="GO" id="GO:0020037">
    <property type="term" value="F:heme binding"/>
    <property type="evidence" value="ECO:0000314"/>
    <property type="project" value="UniProtKB"/>
</dbReference>
<dbReference type="GO" id="GO:0046872">
    <property type="term" value="F:metal ion binding"/>
    <property type="evidence" value="ECO:0007669"/>
    <property type="project" value="UniProtKB-KW"/>
</dbReference>
<dbReference type="GO" id="GO:0008121">
    <property type="term" value="F:ubiquinol-cytochrome-c reductase activity"/>
    <property type="evidence" value="ECO:0000314"/>
    <property type="project" value="UniProtKB"/>
</dbReference>
<dbReference type="GO" id="GO:0048039">
    <property type="term" value="F:ubiquinone binding"/>
    <property type="evidence" value="ECO:0000314"/>
    <property type="project" value="UniProtKB"/>
</dbReference>
<dbReference type="GO" id="GO:0006122">
    <property type="term" value="P:mitochondrial electron transport, ubiquinol to cytochrome c"/>
    <property type="evidence" value="ECO:0000314"/>
    <property type="project" value="UniProtKB"/>
</dbReference>
<dbReference type="GO" id="GO:0022904">
    <property type="term" value="P:respiratory electron transport chain"/>
    <property type="evidence" value="ECO:0000314"/>
    <property type="project" value="UniProtKB"/>
</dbReference>
<dbReference type="CDD" id="cd00290">
    <property type="entry name" value="cytochrome_b_C"/>
    <property type="match status" value="1"/>
</dbReference>
<dbReference type="CDD" id="cd00284">
    <property type="entry name" value="Cytochrome_b_N"/>
    <property type="match status" value="1"/>
</dbReference>
<dbReference type="FunFam" id="1.20.810.10:FF:000002">
    <property type="entry name" value="Cytochrome b"/>
    <property type="match status" value="1"/>
</dbReference>
<dbReference type="Gene3D" id="1.20.810.10">
    <property type="entry name" value="Cytochrome Bc1 Complex, Chain C"/>
    <property type="match status" value="1"/>
</dbReference>
<dbReference type="InterPro" id="IPR005798">
    <property type="entry name" value="Cyt_b/b6_C"/>
</dbReference>
<dbReference type="InterPro" id="IPR036150">
    <property type="entry name" value="Cyt_b/b6_C_sf"/>
</dbReference>
<dbReference type="InterPro" id="IPR005797">
    <property type="entry name" value="Cyt_b/b6_N"/>
</dbReference>
<dbReference type="InterPro" id="IPR027387">
    <property type="entry name" value="Cytb/b6-like_sf"/>
</dbReference>
<dbReference type="InterPro" id="IPR030689">
    <property type="entry name" value="Cytochrome_b"/>
</dbReference>
<dbReference type="InterPro" id="IPR048260">
    <property type="entry name" value="Cytochrome_b_C_euk/bac"/>
</dbReference>
<dbReference type="InterPro" id="IPR048259">
    <property type="entry name" value="Cytochrome_b_N_euk/bac"/>
</dbReference>
<dbReference type="InterPro" id="IPR016174">
    <property type="entry name" value="Di-haem_cyt_TM"/>
</dbReference>
<dbReference type="PANTHER" id="PTHR19271">
    <property type="entry name" value="CYTOCHROME B"/>
    <property type="match status" value="1"/>
</dbReference>
<dbReference type="PANTHER" id="PTHR19271:SF16">
    <property type="entry name" value="CYTOCHROME B"/>
    <property type="match status" value="1"/>
</dbReference>
<dbReference type="Pfam" id="PF00032">
    <property type="entry name" value="Cytochrom_B_C"/>
    <property type="match status" value="1"/>
</dbReference>
<dbReference type="Pfam" id="PF00033">
    <property type="entry name" value="Cytochrome_B"/>
    <property type="match status" value="1"/>
</dbReference>
<dbReference type="PIRSF" id="PIRSF038885">
    <property type="entry name" value="COB"/>
    <property type="match status" value="1"/>
</dbReference>
<dbReference type="SUPFAM" id="SSF81648">
    <property type="entry name" value="a domain/subunit of cytochrome bc1 complex (Ubiquinol-cytochrome c reductase)"/>
    <property type="match status" value="1"/>
</dbReference>
<dbReference type="SUPFAM" id="SSF81342">
    <property type="entry name" value="Transmembrane di-heme cytochromes"/>
    <property type="match status" value="1"/>
</dbReference>
<dbReference type="PROSITE" id="PS51003">
    <property type="entry name" value="CYTB_CTER"/>
    <property type="match status" value="1"/>
</dbReference>
<dbReference type="PROSITE" id="PS51002">
    <property type="entry name" value="CYTB_NTER"/>
    <property type="match status" value="1"/>
</dbReference>
<evidence type="ECO:0000255" key="1">
    <source>
        <dbReference type="PROSITE-ProRule" id="PRU00967"/>
    </source>
</evidence>
<evidence type="ECO:0000255" key="2">
    <source>
        <dbReference type="PROSITE-ProRule" id="PRU00968"/>
    </source>
</evidence>
<evidence type="ECO:0000269" key="3">
    <source>
    </source>
</evidence>
<evidence type="ECO:0000269" key="4">
    <source>
    </source>
</evidence>
<evidence type="ECO:0000269" key="5">
    <source>
    </source>
</evidence>
<evidence type="ECO:0000269" key="6">
    <source>
    </source>
</evidence>
<evidence type="ECO:0000269" key="7">
    <source>
    </source>
</evidence>
<evidence type="ECO:0000269" key="8">
    <source>
    </source>
</evidence>
<evidence type="ECO:0000269" key="9">
    <source>
    </source>
</evidence>
<evidence type="ECO:0000269" key="10">
    <source>
    </source>
</evidence>
<evidence type="ECO:0000269" key="11">
    <source>
    </source>
</evidence>
<evidence type="ECO:0000269" key="12">
    <source>
    </source>
</evidence>
<evidence type="ECO:0000269" key="13">
    <source>
    </source>
</evidence>
<evidence type="ECO:0000305" key="14">
    <source>
    </source>
</evidence>
<evidence type="ECO:0000305" key="15">
    <source>
    </source>
</evidence>
<evidence type="ECO:0000312" key="16">
    <source>
        <dbReference type="Proteomes" id="UP000009136"/>
    </source>
</evidence>
<evidence type="ECO:0007744" key="17">
    <source>
        <dbReference type="PDB" id="1BE3"/>
    </source>
</evidence>
<evidence type="ECO:0007744" key="18">
    <source>
        <dbReference type="PDB" id="1BGY"/>
    </source>
</evidence>
<evidence type="ECO:0007744" key="19">
    <source>
        <dbReference type="PDB" id="1L0L"/>
    </source>
</evidence>
<evidence type="ECO:0007744" key="20">
    <source>
        <dbReference type="PDB" id="1L0N"/>
    </source>
</evidence>
<evidence type="ECO:0007744" key="21">
    <source>
        <dbReference type="PDB" id="1NTK"/>
    </source>
</evidence>
<evidence type="ECO:0007744" key="22">
    <source>
        <dbReference type="PDB" id="1NTM"/>
    </source>
</evidence>
<evidence type="ECO:0007744" key="23">
    <source>
        <dbReference type="PDB" id="1NTZ"/>
    </source>
</evidence>
<evidence type="ECO:0007744" key="24">
    <source>
        <dbReference type="PDB" id="1NU1"/>
    </source>
</evidence>
<evidence type="ECO:0007744" key="25">
    <source>
        <dbReference type="PDB" id="1PP9"/>
    </source>
</evidence>
<evidence type="ECO:0007744" key="26">
    <source>
        <dbReference type="PDB" id="1PPJ"/>
    </source>
</evidence>
<evidence type="ECO:0007744" key="27">
    <source>
        <dbReference type="PDB" id="1SQB"/>
    </source>
</evidence>
<evidence type="ECO:0007744" key="28">
    <source>
        <dbReference type="PDB" id="1SQP"/>
    </source>
</evidence>
<evidence type="ECO:0007744" key="29">
    <source>
        <dbReference type="PDB" id="1SQQ"/>
    </source>
</evidence>
<evidence type="ECO:0007744" key="30">
    <source>
        <dbReference type="PDB" id="1SQV"/>
    </source>
</evidence>
<evidence type="ECO:0007744" key="31">
    <source>
        <dbReference type="PDB" id="1SQX"/>
    </source>
</evidence>
<evidence type="ECO:0007744" key="32">
    <source>
        <dbReference type="PDB" id="2A06"/>
    </source>
</evidence>
<evidence type="ECO:0007744" key="33">
    <source>
        <dbReference type="PDB" id="2FYU"/>
    </source>
</evidence>
<evidence type="ECO:0007744" key="34">
    <source>
        <dbReference type="PDB" id="2YBB"/>
    </source>
</evidence>
<evidence type="ECO:0007744" key="35">
    <source>
        <dbReference type="PDB" id="4D6T"/>
    </source>
</evidence>
<evidence type="ECO:0007744" key="36">
    <source>
        <dbReference type="PDB" id="4D6U"/>
    </source>
</evidence>
<evidence type="ECO:0007829" key="37">
    <source>
        <dbReference type="PDB" id="1BE3"/>
    </source>
</evidence>
<evidence type="ECO:0007829" key="38">
    <source>
        <dbReference type="PDB" id="1NTM"/>
    </source>
</evidence>
<evidence type="ECO:0007829" key="39">
    <source>
        <dbReference type="PDB" id="1PP9"/>
    </source>
</evidence>
<evidence type="ECO:0007829" key="40">
    <source>
        <dbReference type="PDB" id="2FYU"/>
    </source>
</evidence>
<comment type="function">
    <text evidence="5 10 12 15">Component of the ubiquinol-cytochrome c reductase complex (complex III or cytochrome b-c1 complex) that is part of the mitochondrial respiratory chain. The b-c1 complex mediates electron transfer from ubiquinol to cytochrome c. Contributes to the generation of a proton gradient across the mitochondrial membrane that is then used for ATP synthesis.</text>
</comment>
<comment type="cofactor">
    <cofactor evidence="4 6 7 8 11 13">
        <name>heme b</name>
        <dbReference type="ChEBI" id="CHEBI:60344"/>
    </cofactor>
    <text evidence="4 6 7 8 11 13">Binds 2 heme b groups non-covalently.</text>
</comment>
<comment type="subunit">
    <text evidence="4 6 7 8 11 13 15">The cytochrome bc1 complex contains 11 subunits: 3 respiratory subunits (MT-CYB, CYC1 and UQCRFS1), 2 core proteins (UQCRC1 and UQCRC2) and 6 low-molecular weight proteins (UQCRH/QCR6, UQCRB/QCR7, UQCRQ/QCR8, UQCR10/QCR9, UQCR11/QCR10 and a cleavage product of UQCRFS1). This cytochrome bc1 complex then forms a dimer.</text>
</comment>
<comment type="subcellular location">
    <subcellularLocation>
        <location evidence="3 14 15">Mitochondrion inner membrane</location>
        <topology evidence="4 6 7 8 11 13">Multi-pass membrane protein</topology>
    </subcellularLocation>
</comment>
<comment type="tissue specificity">
    <text evidence="3 5 9">Detected in heart (at protein level).</text>
</comment>
<comment type="miscellaneous">
    <text>Heme 1 (or BL or b562) is low-potential and absorbs at about 562 nm, and heme 2 (or BH or b566) is high-potential and absorbs at about 566 nm.</text>
</comment>
<comment type="similarity">
    <text evidence="1 2">Belongs to the cytochrome b family.</text>
</comment>
<comment type="caution">
    <text evidence="4 6 7 8 11 13">The full-length protein contains only eight transmembrane helices, not nine as predicted by bioinformatics tools.</text>
</comment>
<accession>P00157</accession>
<accession>Q8SE06</accession>
<sequence>MTNIRKSHPLMKIVNNAFIDLPAPSNISSWWNFGSLLGICLILQILTGLFLAMHYTSDTTTAFSSVTHICRDVNYGWIIRYMHANGASMFFICLYMHVGRGLYYGSYTFLETWNIGVILLLTVMATAFMGYVLPWGQMSFWGATVITNLLSAIPYIGTNLVEWIWGGFSVDKATLTRFFAFHFILPFIIMAIAMVHLLFLHETGSNNPTGISSDVDKIPFHPYYTIKDILGALLLILALMLLVLFAPDLLGDPDNYTPANPLNTPPHIKPEWYFLFAYAILRSIPNKLGGVLALAFSILILALIPLLHTSKQRSMMFRPLSQCLFWALVADLLTLTWIGGQPVEHPYITIGQLASVLYFLLILVLMPTAGTIENKLLKW</sequence>